<reference key="1">
    <citation type="journal article" date="2007" name="ISME J.">
        <title>Population level functional diversity in a microbial community revealed by comparative genomic and metagenomic analyses.</title>
        <authorList>
            <person name="Bhaya D."/>
            <person name="Grossman A.R."/>
            <person name="Steunou A.-S."/>
            <person name="Khuri N."/>
            <person name="Cohan F.M."/>
            <person name="Hamamura N."/>
            <person name="Melendrez M.C."/>
            <person name="Bateson M.M."/>
            <person name="Ward D.M."/>
            <person name="Heidelberg J.F."/>
        </authorList>
    </citation>
    <scope>NUCLEOTIDE SEQUENCE [LARGE SCALE GENOMIC DNA]</scope>
    <source>
        <strain>JA-3-3Ab</strain>
    </source>
</reference>
<feature type="chain" id="PRO_1000048424" description="Light-independent protochlorophyllide reductase subunit B">
    <location>
        <begin position="1"/>
        <end position="510"/>
    </location>
</feature>
<feature type="active site" description="Proton donor" evidence="1">
    <location>
        <position position="296"/>
    </location>
</feature>
<feature type="binding site" evidence="1">
    <location>
        <position position="36"/>
    </location>
    <ligand>
        <name>[4Fe-4S] cluster</name>
        <dbReference type="ChEBI" id="CHEBI:49883"/>
        <note>ligand shared with heterodimeric partner</note>
    </ligand>
</feature>
<feature type="binding site" evidence="1">
    <location>
        <begin position="431"/>
        <end position="432"/>
    </location>
    <ligand>
        <name>substrate</name>
    </ligand>
</feature>
<dbReference type="EC" id="1.3.7.7" evidence="1"/>
<dbReference type="EMBL" id="CP000239">
    <property type="protein sequence ID" value="ABC99098.1"/>
    <property type="molecule type" value="Genomic_DNA"/>
</dbReference>
<dbReference type="RefSeq" id="WP_011429781.1">
    <property type="nucleotide sequence ID" value="NC_007775.1"/>
</dbReference>
<dbReference type="SMR" id="Q2JVX9"/>
<dbReference type="STRING" id="321327.CYA_0895"/>
<dbReference type="KEGG" id="cya:CYA_0895"/>
<dbReference type="eggNOG" id="COG2710">
    <property type="taxonomic scope" value="Bacteria"/>
</dbReference>
<dbReference type="HOGENOM" id="CLU_025470_0_0_3"/>
<dbReference type="OrthoDB" id="5717231at2"/>
<dbReference type="UniPathway" id="UPA00670"/>
<dbReference type="Proteomes" id="UP000008818">
    <property type="component" value="Chromosome"/>
</dbReference>
<dbReference type="GO" id="GO:0051539">
    <property type="term" value="F:4 iron, 4 sulfur cluster binding"/>
    <property type="evidence" value="ECO:0007669"/>
    <property type="project" value="UniProtKB-UniRule"/>
</dbReference>
<dbReference type="GO" id="GO:0005524">
    <property type="term" value="F:ATP binding"/>
    <property type="evidence" value="ECO:0007669"/>
    <property type="project" value="UniProtKB-UniRule"/>
</dbReference>
<dbReference type="GO" id="GO:0046872">
    <property type="term" value="F:metal ion binding"/>
    <property type="evidence" value="ECO:0007669"/>
    <property type="project" value="UniProtKB-KW"/>
</dbReference>
<dbReference type="GO" id="GO:0016730">
    <property type="term" value="F:oxidoreductase activity, acting on iron-sulfur proteins as donors"/>
    <property type="evidence" value="ECO:0007669"/>
    <property type="project" value="InterPro"/>
</dbReference>
<dbReference type="GO" id="GO:0016636">
    <property type="term" value="F:oxidoreductase activity, acting on the CH-CH group of donors, iron-sulfur protein as acceptor"/>
    <property type="evidence" value="ECO:0007669"/>
    <property type="project" value="UniProtKB-UniRule"/>
</dbReference>
<dbReference type="GO" id="GO:0036068">
    <property type="term" value="P:light-independent chlorophyll biosynthetic process"/>
    <property type="evidence" value="ECO:0007669"/>
    <property type="project" value="UniProtKB-UniRule"/>
</dbReference>
<dbReference type="GO" id="GO:0019685">
    <property type="term" value="P:photosynthesis, dark reaction"/>
    <property type="evidence" value="ECO:0007669"/>
    <property type="project" value="InterPro"/>
</dbReference>
<dbReference type="CDD" id="cd01981">
    <property type="entry name" value="Pchlide_reductase_B"/>
    <property type="match status" value="1"/>
</dbReference>
<dbReference type="Gene3D" id="1.20.89.20">
    <property type="match status" value="1"/>
</dbReference>
<dbReference type="Gene3D" id="3.40.50.1980">
    <property type="entry name" value="Nitrogenase molybdenum iron protein domain"/>
    <property type="match status" value="3"/>
</dbReference>
<dbReference type="Gene3D" id="1.10.8.550">
    <property type="entry name" value="Proto-chlorophyllide reductase 57 kD subunit B"/>
    <property type="match status" value="1"/>
</dbReference>
<dbReference type="HAMAP" id="MF_00353">
    <property type="entry name" value="ChlB_BchB"/>
    <property type="match status" value="1"/>
</dbReference>
<dbReference type="InterPro" id="IPR050152">
    <property type="entry name" value="ChlB/BchB/BchZ"/>
</dbReference>
<dbReference type="InterPro" id="IPR013580">
    <property type="entry name" value="LI-POR_suB-like_C"/>
</dbReference>
<dbReference type="InterPro" id="IPR000510">
    <property type="entry name" value="Nase/OxRdtase_comp1"/>
</dbReference>
<dbReference type="InterPro" id="IPR042298">
    <property type="entry name" value="P-CP_red_C"/>
</dbReference>
<dbReference type="InterPro" id="IPR005969">
    <property type="entry name" value="Protochl_reductB"/>
</dbReference>
<dbReference type="InterPro" id="IPR016209">
    <property type="entry name" value="Protochlorophyllide_Rdtase"/>
</dbReference>
<dbReference type="NCBIfam" id="TIGR01278">
    <property type="entry name" value="DPOR_BchB"/>
    <property type="match status" value="1"/>
</dbReference>
<dbReference type="PANTHER" id="PTHR33712">
    <property type="entry name" value="LIGHT-INDEPENDENT PROTOCHLOROPHYLLIDE REDUCTASE SUBUNIT B"/>
    <property type="match status" value="1"/>
</dbReference>
<dbReference type="PANTHER" id="PTHR33712:SF7">
    <property type="entry name" value="LIGHT-INDEPENDENT PROTOCHLOROPHYLLIDE REDUCTASE SUBUNIT B"/>
    <property type="match status" value="1"/>
</dbReference>
<dbReference type="Pfam" id="PF00148">
    <property type="entry name" value="Oxidored_nitro"/>
    <property type="match status" value="1"/>
</dbReference>
<dbReference type="Pfam" id="PF08369">
    <property type="entry name" value="PCP_red"/>
    <property type="match status" value="1"/>
</dbReference>
<dbReference type="PIRSF" id="PIRSF000163">
    <property type="entry name" value="PCP_ChlB"/>
    <property type="match status" value="1"/>
</dbReference>
<dbReference type="SUPFAM" id="SSF53807">
    <property type="entry name" value="Helical backbone' metal receptor"/>
    <property type="match status" value="1"/>
</dbReference>
<accession>Q2JVX9</accession>
<sequence>MKLAYWMYAGPAHIGTLRVASSFKNVHSIMHAPLGDDYFNVMRSMLERERDFTPVTTSVVDRQVLARGSDEKVIRNIVRKDGEEQPDLIVVTPTCTSSILQEDLHHFVRQAQLSSRCDVLLADVNHYRVNELQAAERTLHQIVEFYINKARKSGELSGPPRRTERPSCNILGISSLGFHHAHDLRELKKLLQDLGIELNLVIPQGASVHNLKHLGRAWFNVVPYRELGPMTARYLQEQFGTPYVEITPMGVVETARFIRQIQQVLNEQGIPVDYEPYIQEQTLYVSQAAWFSRSIDCQNLTGKKAVVFGDCTHAAAITKILAREMGVHVVWAGSYCTYDGEWFQAEVGGYCDQVLLTEDHTRVADAIAQVEPAAIFGTQMERHVGKRLRIPCGVISAPMHVQDFPIGYRPFLGYEGANQIVDLIYNSFTLGMEDHLLEVFGGHDTKEVIHKSLSADSDLIWTREAQAELNKVPGFVRGKVKRNTEKFARERGLTEITLEVMYAAKEALGA</sequence>
<gene>
    <name evidence="1" type="primary">chlB</name>
    <name type="ordered locus">CYA_0895</name>
</gene>
<protein>
    <recommendedName>
        <fullName evidence="1">Light-independent protochlorophyllide reductase subunit B</fullName>
        <shortName evidence="1">DPOR subunit B</shortName>
        <shortName evidence="1">LI-POR subunit B</shortName>
        <ecNumber evidence="1">1.3.7.7</ecNumber>
    </recommendedName>
</protein>
<organism>
    <name type="scientific">Synechococcus sp. (strain JA-3-3Ab)</name>
    <name type="common">Cyanobacteria bacterium Yellowstone A-Prime</name>
    <dbReference type="NCBI Taxonomy" id="321327"/>
    <lineage>
        <taxon>Bacteria</taxon>
        <taxon>Bacillati</taxon>
        <taxon>Cyanobacteriota</taxon>
        <taxon>Cyanophyceae</taxon>
        <taxon>Synechococcales</taxon>
        <taxon>Synechococcaceae</taxon>
        <taxon>Synechococcus</taxon>
    </lineage>
</organism>
<keyword id="KW-0004">4Fe-4S</keyword>
<keyword id="KW-0067">ATP-binding</keyword>
<keyword id="KW-0149">Chlorophyll biosynthesis</keyword>
<keyword id="KW-0408">Iron</keyword>
<keyword id="KW-0411">Iron-sulfur</keyword>
<keyword id="KW-0479">Metal-binding</keyword>
<keyword id="KW-0547">Nucleotide-binding</keyword>
<keyword id="KW-0560">Oxidoreductase</keyword>
<keyword id="KW-0602">Photosynthesis</keyword>
<proteinExistence type="inferred from homology"/>
<evidence type="ECO:0000255" key="1">
    <source>
        <dbReference type="HAMAP-Rule" id="MF_00353"/>
    </source>
</evidence>
<comment type="function">
    <text evidence="1">Component of the dark-operative protochlorophyllide reductase (DPOR) that uses Mg-ATP and reduced ferredoxin to reduce ring D of protochlorophyllide (Pchlide) to form chlorophyllide a (Chlide). This reaction is light-independent. The NB-protein (ChlN-ChlB) is the catalytic component of the complex.</text>
</comment>
<comment type="catalytic activity">
    <reaction evidence="1">
        <text>chlorophyllide a + oxidized 2[4Fe-4S]-[ferredoxin] + 2 ADP + 2 phosphate = protochlorophyllide a + reduced 2[4Fe-4S]-[ferredoxin] + 2 ATP + 2 H2O</text>
        <dbReference type="Rhea" id="RHEA:28202"/>
        <dbReference type="Rhea" id="RHEA-COMP:10002"/>
        <dbReference type="Rhea" id="RHEA-COMP:10004"/>
        <dbReference type="ChEBI" id="CHEBI:15377"/>
        <dbReference type="ChEBI" id="CHEBI:30616"/>
        <dbReference type="ChEBI" id="CHEBI:33722"/>
        <dbReference type="ChEBI" id="CHEBI:33723"/>
        <dbReference type="ChEBI" id="CHEBI:43474"/>
        <dbReference type="ChEBI" id="CHEBI:83348"/>
        <dbReference type="ChEBI" id="CHEBI:83350"/>
        <dbReference type="ChEBI" id="CHEBI:456216"/>
        <dbReference type="EC" id="1.3.7.7"/>
    </reaction>
</comment>
<comment type="cofactor">
    <cofactor evidence="1">
        <name>[4Fe-4S] cluster</name>
        <dbReference type="ChEBI" id="CHEBI:49883"/>
    </cofactor>
    <text evidence="1">Binds 1 [4Fe-4S] cluster per heterodimer. The cluster is bound at the heterodimer interface by residues from both subunits.</text>
</comment>
<comment type="pathway">
    <text evidence="1">Porphyrin-containing compound metabolism; chlorophyll biosynthesis (light-independent).</text>
</comment>
<comment type="subunit">
    <text evidence="1">Protochlorophyllide reductase is composed of three subunits; ChlL, ChlN and ChlB. Forms a heterotetramer of two ChlB and two ChlN subunits.</text>
</comment>
<comment type="similarity">
    <text evidence="1">Belongs to the ChlB/BchB/BchZ family.</text>
</comment>
<name>CHLB_SYNJA</name>